<reference key="1">
    <citation type="journal article" date="2005" name="Nucleic Acids Res.">
        <title>Genome dynamics and diversity of Shigella species, the etiologic agents of bacillary dysentery.</title>
        <authorList>
            <person name="Yang F."/>
            <person name="Yang J."/>
            <person name="Zhang X."/>
            <person name="Chen L."/>
            <person name="Jiang Y."/>
            <person name="Yan Y."/>
            <person name="Tang X."/>
            <person name="Wang J."/>
            <person name="Xiong Z."/>
            <person name="Dong J."/>
            <person name="Xue Y."/>
            <person name="Zhu Y."/>
            <person name="Xu X."/>
            <person name="Sun L."/>
            <person name="Chen S."/>
            <person name="Nie H."/>
            <person name="Peng J."/>
            <person name="Xu J."/>
            <person name="Wang Y."/>
            <person name="Yuan Z."/>
            <person name="Wen Y."/>
            <person name="Yao Z."/>
            <person name="Shen Y."/>
            <person name="Qiang B."/>
            <person name="Hou Y."/>
            <person name="Yu J."/>
            <person name="Jin Q."/>
        </authorList>
    </citation>
    <scope>NUCLEOTIDE SEQUENCE [LARGE SCALE GENOMIC DNA]</scope>
    <source>
        <strain>Ss046</strain>
    </source>
</reference>
<accession>Q3Z327</accession>
<gene>
    <name evidence="1" type="primary">plsX</name>
    <name type="ordered locus">SSON_1110</name>
</gene>
<sequence>MTRLTLALDVMGGDFGPSVTVPAALQALNSNSQLTLLLVGNPDAITPLLAKADFEQRSRLQIIPAQSVIASDARPSQAIRASRGSSMRVALELVKEGRAQACVSAGNTGALMGLAKLLLKPLEGIERPALVTVLPHQQKGKTVVLDLGANVDCDSTMLVQFAIMGSVLAEEVVEIPNPRVALLNIGEEEVKGLDSIRDASAVLKTIPSINYIGYLEANELLTGKTDVLVCDGFTGNVTLKTMEGVVRMFLSLLKSQGEGKKRSWWLLLLKRWLQKSLTRRFSHLNPDQYNGACLLGLRGTVIKSHGAANQRAFAVAIEQAVQAVQRQVPQRIAARLESVYPAGFELLDGGKSGTLR</sequence>
<protein>
    <recommendedName>
        <fullName evidence="1">Phosphate acyltransferase</fullName>
        <ecNumber evidence="1">2.3.1.274</ecNumber>
    </recommendedName>
    <alternativeName>
        <fullName evidence="1">Acyl-ACP phosphotransacylase</fullName>
    </alternativeName>
    <alternativeName>
        <fullName evidence="1">Acyl-[acyl-carrier-protein]--phosphate acyltransferase</fullName>
    </alternativeName>
    <alternativeName>
        <fullName evidence="1">Phosphate-acyl-ACP acyltransferase</fullName>
    </alternativeName>
</protein>
<evidence type="ECO:0000255" key="1">
    <source>
        <dbReference type="HAMAP-Rule" id="MF_00019"/>
    </source>
</evidence>
<evidence type="ECO:0000305" key="2"/>
<proteinExistence type="inferred from homology"/>
<feature type="chain" id="PRO_0000329266" description="Phosphate acyltransferase">
    <location>
        <begin position="1"/>
        <end position="356"/>
    </location>
</feature>
<keyword id="KW-0963">Cytoplasm</keyword>
<keyword id="KW-0444">Lipid biosynthesis</keyword>
<keyword id="KW-0443">Lipid metabolism</keyword>
<keyword id="KW-0594">Phospholipid biosynthesis</keyword>
<keyword id="KW-1208">Phospholipid metabolism</keyword>
<keyword id="KW-1185">Reference proteome</keyword>
<keyword id="KW-0808">Transferase</keyword>
<organism>
    <name type="scientific">Shigella sonnei (strain Ss046)</name>
    <dbReference type="NCBI Taxonomy" id="300269"/>
    <lineage>
        <taxon>Bacteria</taxon>
        <taxon>Pseudomonadati</taxon>
        <taxon>Pseudomonadota</taxon>
        <taxon>Gammaproteobacteria</taxon>
        <taxon>Enterobacterales</taxon>
        <taxon>Enterobacteriaceae</taxon>
        <taxon>Shigella</taxon>
    </lineage>
</organism>
<dbReference type="EC" id="2.3.1.274" evidence="1"/>
<dbReference type="EMBL" id="CP000038">
    <property type="protein sequence ID" value="AAZ87835.1"/>
    <property type="status" value="ALT_INIT"/>
    <property type="molecule type" value="Genomic_DNA"/>
</dbReference>
<dbReference type="RefSeq" id="WP_000197578.1">
    <property type="nucleotide sequence ID" value="NC_007384.1"/>
</dbReference>
<dbReference type="SMR" id="Q3Z327"/>
<dbReference type="GeneID" id="93776318"/>
<dbReference type="KEGG" id="ssn:SSON_1110"/>
<dbReference type="HOGENOM" id="CLU_039379_1_0_6"/>
<dbReference type="UniPathway" id="UPA00085"/>
<dbReference type="Proteomes" id="UP000002529">
    <property type="component" value="Chromosome"/>
</dbReference>
<dbReference type="GO" id="GO:0005737">
    <property type="term" value="C:cytoplasm"/>
    <property type="evidence" value="ECO:0007669"/>
    <property type="project" value="UniProtKB-SubCell"/>
</dbReference>
<dbReference type="GO" id="GO:0043811">
    <property type="term" value="F:phosphate:acyl-[acyl carrier protein] acyltransferase activity"/>
    <property type="evidence" value="ECO:0007669"/>
    <property type="project" value="UniProtKB-UniRule"/>
</dbReference>
<dbReference type="GO" id="GO:0006633">
    <property type="term" value="P:fatty acid biosynthetic process"/>
    <property type="evidence" value="ECO:0007669"/>
    <property type="project" value="UniProtKB-UniRule"/>
</dbReference>
<dbReference type="GO" id="GO:0008654">
    <property type="term" value="P:phospholipid biosynthetic process"/>
    <property type="evidence" value="ECO:0007669"/>
    <property type="project" value="UniProtKB-KW"/>
</dbReference>
<dbReference type="FunFam" id="3.40.718.10:FF:000008">
    <property type="entry name" value="Phosphate acyltransferase"/>
    <property type="match status" value="1"/>
</dbReference>
<dbReference type="Gene3D" id="3.40.718.10">
    <property type="entry name" value="Isopropylmalate Dehydrogenase"/>
    <property type="match status" value="1"/>
</dbReference>
<dbReference type="HAMAP" id="MF_00019">
    <property type="entry name" value="PlsX"/>
    <property type="match status" value="1"/>
</dbReference>
<dbReference type="InterPro" id="IPR003664">
    <property type="entry name" value="FA_synthesis"/>
</dbReference>
<dbReference type="InterPro" id="IPR012281">
    <property type="entry name" value="Phospholipid_synth_PlsX-like"/>
</dbReference>
<dbReference type="NCBIfam" id="TIGR00182">
    <property type="entry name" value="plsX"/>
    <property type="match status" value="1"/>
</dbReference>
<dbReference type="PANTHER" id="PTHR30100">
    <property type="entry name" value="FATTY ACID/PHOSPHOLIPID SYNTHESIS PROTEIN PLSX"/>
    <property type="match status" value="1"/>
</dbReference>
<dbReference type="PANTHER" id="PTHR30100:SF1">
    <property type="entry name" value="PHOSPHATE ACYLTRANSFERASE"/>
    <property type="match status" value="1"/>
</dbReference>
<dbReference type="Pfam" id="PF02504">
    <property type="entry name" value="FA_synthesis"/>
    <property type="match status" value="1"/>
</dbReference>
<dbReference type="PIRSF" id="PIRSF002465">
    <property type="entry name" value="Phsphlp_syn_PlsX"/>
    <property type="match status" value="1"/>
</dbReference>
<dbReference type="SUPFAM" id="SSF53659">
    <property type="entry name" value="Isocitrate/Isopropylmalate dehydrogenase-like"/>
    <property type="match status" value="1"/>
</dbReference>
<name>PLSX_SHISS</name>
<comment type="function">
    <text evidence="1">Catalyzes the reversible formation of acyl-phosphate (acyl-PO(4)) from acyl-[acyl-carrier-protein] (acyl-ACP). This enzyme utilizes acyl-ACP as fatty acyl donor, but not acyl-CoA.</text>
</comment>
<comment type="catalytic activity">
    <reaction evidence="1">
        <text>a fatty acyl-[ACP] + phosphate = an acyl phosphate + holo-[ACP]</text>
        <dbReference type="Rhea" id="RHEA:42292"/>
        <dbReference type="Rhea" id="RHEA-COMP:9685"/>
        <dbReference type="Rhea" id="RHEA-COMP:14125"/>
        <dbReference type="ChEBI" id="CHEBI:43474"/>
        <dbReference type="ChEBI" id="CHEBI:59918"/>
        <dbReference type="ChEBI" id="CHEBI:64479"/>
        <dbReference type="ChEBI" id="CHEBI:138651"/>
        <dbReference type="EC" id="2.3.1.274"/>
    </reaction>
</comment>
<comment type="pathway">
    <text evidence="1">Lipid metabolism; phospholipid metabolism.</text>
</comment>
<comment type="subunit">
    <text evidence="1">Homodimer. Probably interacts with PlsY.</text>
</comment>
<comment type="subcellular location">
    <subcellularLocation>
        <location evidence="1">Cytoplasm</location>
    </subcellularLocation>
    <text evidence="1">Associated with the membrane possibly through PlsY.</text>
</comment>
<comment type="similarity">
    <text evidence="1">Belongs to the PlsX family.</text>
</comment>
<comment type="sequence caution" evidence="2">
    <conflict type="erroneous initiation">
        <sequence resource="EMBL-CDS" id="AAZ87835"/>
    </conflict>
</comment>